<organism>
    <name type="scientific">Edwardsiella ictaluri (strain 93-146)</name>
    <dbReference type="NCBI Taxonomy" id="634503"/>
    <lineage>
        <taxon>Bacteria</taxon>
        <taxon>Pseudomonadati</taxon>
        <taxon>Pseudomonadota</taxon>
        <taxon>Gammaproteobacteria</taxon>
        <taxon>Enterobacterales</taxon>
        <taxon>Hafniaceae</taxon>
        <taxon>Edwardsiella</taxon>
    </lineage>
</organism>
<proteinExistence type="inferred from homology"/>
<evidence type="ECO:0000255" key="1">
    <source>
        <dbReference type="HAMAP-Rule" id="MF_01593"/>
    </source>
</evidence>
<sequence>MIKWPWRTQPPAQQDSYPWPEACAIPLLAALGDDEQQRLIALARQVIRQKRLIPLQELRVTPLMEARIALLFALPVLELGIGWLDGFHEILLYPEPYVLHEEWEDDIGLVHCGPSVQAGQCSAQGPVVLNWLDVRDSFDCSGYNLIIHETAHKLDMRNAGIASGIPPIPLREIAAWEQALHAAMEAIQEEADLLGKEGASMDAYAASEPAECFAVLSEYFFSAPELLSERFPAVYAHFARFYRQDPLQRLYQSGLLTPESF</sequence>
<feature type="chain" id="PRO_1000215651" description="Mlc titration factor A">
    <location>
        <begin position="1"/>
        <end position="261"/>
    </location>
</feature>
<feature type="binding site" evidence="1">
    <location>
        <position position="111"/>
    </location>
    <ligand>
        <name>Zn(2+)</name>
        <dbReference type="ChEBI" id="CHEBI:29105"/>
    </ligand>
</feature>
<feature type="binding site" evidence="1">
    <location>
        <position position="148"/>
    </location>
    <ligand>
        <name>Zn(2+)</name>
        <dbReference type="ChEBI" id="CHEBI:29105"/>
    </ligand>
</feature>
<feature type="binding site" evidence="1">
    <location>
        <position position="152"/>
    </location>
    <ligand>
        <name>Zn(2+)</name>
        <dbReference type="ChEBI" id="CHEBI:29105"/>
    </ligand>
</feature>
<feature type="binding site" evidence="1">
    <location>
        <position position="211"/>
    </location>
    <ligand>
        <name>Zn(2+)</name>
        <dbReference type="ChEBI" id="CHEBI:29105"/>
    </ligand>
</feature>
<protein>
    <recommendedName>
        <fullName evidence="1">Mlc titration factor A</fullName>
    </recommendedName>
    <alternativeName>
        <fullName evidence="1">Probable zinc metallopeptidase MtfA</fullName>
        <ecNumber evidence="1">3.4.11.-</ecNumber>
    </alternativeName>
</protein>
<comment type="function">
    <text evidence="1">Involved in the modulation of the activity of the glucose-phosphotransferase system (glucose-PTS). Interacts with the transcriptional repressor Mlc, preventing its interaction with DNA and leading to the modulation of expression of genes regulated by Mlc, including ptsG, which encodes the PTS system glucose-specific EIICB component.</text>
</comment>
<comment type="function">
    <text evidence="1">Shows zinc-dependent metallopeptidase activity.</text>
</comment>
<comment type="cofactor">
    <cofactor evidence="1">
        <name>Zn(2+)</name>
        <dbReference type="ChEBI" id="CHEBI:29105"/>
    </cofactor>
    <text evidence="1">Binds 1 zinc ion per subunit.</text>
</comment>
<comment type="subunit">
    <text evidence="1">Interacts with Mlc.</text>
</comment>
<comment type="subcellular location">
    <subcellularLocation>
        <location evidence="1">Cytoplasm</location>
    </subcellularLocation>
</comment>
<comment type="similarity">
    <text evidence="1">Belongs to the MtfA family.</text>
</comment>
<accession>C5BD33</accession>
<gene>
    <name evidence="1" type="primary">mtfA</name>
    <name type="ordered locus">NT01EI_1338</name>
</gene>
<reference key="1">
    <citation type="submission" date="2009-03" db="EMBL/GenBank/DDBJ databases">
        <title>Complete genome sequence of Edwardsiella ictaluri 93-146.</title>
        <authorList>
            <person name="Williams M.L."/>
            <person name="Gillaspy A.F."/>
            <person name="Dyer D.W."/>
            <person name="Thune R.L."/>
            <person name="Waldbieser G.C."/>
            <person name="Schuster S.C."/>
            <person name="Gipson J."/>
            <person name="Zaitshik J."/>
            <person name="Landry C."/>
            <person name="Lawrence M.L."/>
        </authorList>
    </citation>
    <scope>NUCLEOTIDE SEQUENCE [LARGE SCALE GENOMIC DNA]</scope>
    <source>
        <strain>93-146</strain>
    </source>
</reference>
<keyword id="KW-0031">Aminopeptidase</keyword>
<keyword id="KW-0963">Cytoplasm</keyword>
<keyword id="KW-0378">Hydrolase</keyword>
<keyword id="KW-0479">Metal-binding</keyword>
<keyword id="KW-0482">Metalloprotease</keyword>
<keyword id="KW-0645">Protease</keyword>
<keyword id="KW-0862">Zinc</keyword>
<dbReference type="EC" id="3.4.11.-" evidence="1"/>
<dbReference type="EMBL" id="CP001600">
    <property type="protein sequence ID" value="ACR68528.1"/>
    <property type="molecule type" value="Genomic_DNA"/>
</dbReference>
<dbReference type="RefSeq" id="WP_015870693.1">
    <property type="nucleotide sequence ID" value="NZ_CP169062.1"/>
</dbReference>
<dbReference type="SMR" id="C5BD33"/>
<dbReference type="STRING" id="67780.B6E78_00055"/>
<dbReference type="MEROPS" id="M90.001"/>
<dbReference type="GeneID" id="69538351"/>
<dbReference type="KEGG" id="eic:NT01EI_1338"/>
<dbReference type="PATRIC" id="fig|634503.3.peg.1202"/>
<dbReference type="HOGENOM" id="CLU_063037_2_0_6"/>
<dbReference type="OrthoDB" id="9786424at2"/>
<dbReference type="Proteomes" id="UP000001485">
    <property type="component" value="Chromosome"/>
</dbReference>
<dbReference type="GO" id="GO:0005829">
    <property type="term" value="C:cytosol"/>
    <property type="evidence" value="ECO:0007669"/>
    <property type="project" value="TreeGrafter"/>
</dbReference>
<dbReference type="GO" id="GO:0004177">
    <property type="term" value="F:aminopeptidase activity"/>
    <property type="evidence" value="ECO:0007669"/>
    <property type="project" value="UniProtKB-UniRule"/>
</dbReference>
<dbReference type="GO" id="GO:0008237">
    <property type="term" value="F:metallopeptidase activity"/>
    <property type="evidence" value="ECO:0007669"/>
    <property type="project" value="UniProtKB-UniRule"/>
</dbReference>
<dbReference type="GO" id="GO:0008270">
    <property type="term" value="F:zinc ion binding"/>
    <property type="evidence" value="ECO:0007669"/>
    <property type="project" value="UniProtKB-UniRule"/>
</dbReference>
<dbReference type="GO" id="GO:0006508">
    <property type="term" value="P:proteolysis"/>
    <property type="evidence" value="ECO:0007669"/>
    <property type="project" value="UniProtKB-KW"/>
</dbReference>
<dbReference type="CDD" id="cd20169">
    <property type="entry name" value="Peptidase_M90_mtfA"/>
    <property type="match status" value="1"/>
</dbReference>
<dbReference type="FunFam" id="1.10.472.150:FF:000001">
    <property type="entry name" value="Protein MtfA"/>
    <property type="match status" value="1"/>
</dbReference>
<dbReference type="FunFam" id="3.40.390.10:FF:000012">
    <property type="entry name" value="Protein MtfA"/>
    <property type="match status" value="1"/>
</dbReference>
<dbReference type="Gene3D" id="3.40.390.10">
    <property type="entry name" value="Collagenase (Catalytic Domain)"/>
    <property type="match status" value="1"/>
</dbReference>
<dbReference type="Gene3D" id="1.10.472.150">
    <property type="entry name" value="Glucose-regulated metallo-peptidase M90, N-terminal domain"/>
    <property type="match status" value="1"/>
</dbReference>
<dbReference type="HAMAP" id="MF_01593">
    <property type="entry name" value="MtfA"/>
    <property type="match status" value="1"/>
</dbReference>
<dbReference type="InterPro" id="IPR024079">
    <property type="entry name" value="MetalloPept_cat_dom_sf"/>
</dbReference>
<dbReference type="InterPro" id="IPR057256">
    <property type="entry name" value="MtfA_enterob"/>
</dbReference>
<dbReference type="InterPro" id="IPR010384">
    <property type="entry name" value="MtfA_fam"/>
</dbReference>
<dbReference type="InterPro" id="IPR042252">
    <property type="entry name" value="MtfA_N"/>
</dbReference>
<dbReference type="NCBIfam" id="NF011939">
    <property type="entry name" value="PRK15410.1"/>
    <property type="match status" value="1"/>
</dbReference>
<dbReference type="PANTHER" id="PTHR30164">
    <property type="entry name" value="MTFA PEPTIDASE"/>
    <property type="match status" value="1"/>
</dbReference>
<dbReference type="PANTHER" id="PTHR30164:SF2">
    <property type="entry name" value="PROTEIN MTFA"/>
    <property type="match status" value="1"/>
</dbReference>
<dbReference type="Pfam" id="PF06167">
    <property type="entry name" value="Peptidase_M90"/>
    <property type="match status" value="1"/>
</dbReference>
<dbReference type="SUPFAM" id="SSF55486">
    <property type="entry name" value="Metalloproteases ('zincins'), catalytic domain"/>
    <property type="match status" value="1"/>
</dbReference>
<name>MTFA_EDWI9</name>